<proteinExistence type="evidence at transcript level"/>
<accession>O82387</accession>
<accession>Q94CM2</accession>
<accession>Q94G54</accession>
<protein>
    <recommendedName>
        <fullName evidence="7">Cell division control protein 6 homolog</fullName>
        <shortName evidence="6">AtCDC6</shortName>
        <shortName evidence="7">AtCDC6A</shortName>
        <shortName evidence="5">Cdc6At</shortName>
        <shortName evidence="7">Cell division control protein 6 homolog A</shortName>
    </recommendedName>
</protein>
<evidence type="ECO:0000256" key="1">
    <source>
        <dbReference type="SAM" id="MobiDB-lite"/>
    </source>
</evidence>
<evidence type="ECO:0000269" key="2">
    <source>
    </source>
</evidence>
<evidence type="ECO:0000269" key="3">
    <source>
    </source>
</evidence>
<evidence type="ECO:0000269" key="4">
    <source>
    </source>
</evidence>
<evidence type="ECO:0000303" key="5">
    <source>
    </source>
</evidence>
<evidence type="ECO:0000303" key="6">
    <source>
    </source>
</evidence>
<evidence type="ECO:0000305" key="7"/>
<evidence type="ECO:0000305" key="8">
    <source>
    </source>
</evidence>
<evidence type="ECO:0000312" key="9">
    <source>
        <dbReference type="Araport" id="AT2G29680"/>
    </source>
</evidence>
<feature type="chain" id="PRO_0000432983" description="Cell division control protein 6 homolog">
    <location>
        <begin position="1"/>
        <end position="539"/>
    </location>
</feature>
<feature type="region of interest" description="Disordered" evidence="1">
    <location>
        <begin position="1"/>
        <end position="40"/>
    </location>
</feature>
<feature type="short sequence motif" description="Nuclear localization signal" evidence="7">
    <location>
        <begin position="35"/>
        <end position="38"/>
    </location>
</feature>
<feature type="splice variant" id="VSP_057638" description="In isoform 2." evidence="7">
    <location>
        <begin position="280"/>
        <end position="310"/>
    </location>
</feature>
<feature type="sequence conflict" description="In Ref. 1; AAK68875." evidence="7" ref="1">
    <original>K</original>
    <variation>N</variation>
    <location>
        <position position="76"/>
    </location>
</feature>
<feature type="sequence conflict" description="In Ref. 1; AAK68875." evidence="7" ref="1">
    <original>V</original>
    <variation>E</variation>
    <location>
        <position position="94"/>
    </location>
</feature>
<feature type="sequence conflict" description="In Ref. 1; AAK68875." evidence="7" ref="1">
    <original>L</original>
    <variation>F</variation>
    <location>
        <position position="273"/>
    </location>
</feature>
<feature type="sequence conflict" description="In Ref. 1; AAK68875." evidence="7" ref="1">
    <original>L</original>
    <variation>H</variation>
    <location>
        <position position="506"/>
    </location>
</feature>
<dbReference type="EMBL" id="AF275940">
    <property type="protein sequence ID" value="AAK68875.1"/>
    <property type="molecule type" value="mRNA"/>
</dbReference>
<dbReference type="EMBL" id="AJ271606">
    <property type="protein sequence ID" value="CAC81074.1"/>
    <property type="molecule type" value="mRNA"/>
</dbReference>
<dbReference type="EMBL" id="AJ293020">
    <property type="protein sequence ID" value="CAC59688.1"/>
    <property type="molecule type" value="mRNA"/>
</dbReference>
<dbReference type="EMBL" id="AC005496">
    <property type="protein sequence ID" value="AAC35241.2"/>
    <property type="molecule type" value="Genomic_DNA"/>
</dbReference>
<dbReference type="EMBL" id="CP002685">
    <property type="protein sequence ID" value="AEC08292.1"/>
    <property type="molecule type" value="Genomic_DNA"/>
</dbReference>
<dbReference type="EMBL" id="CP002685">
    <property type="protein sequence ID" value="AEC08293.1"/>
    <property type="molecule type" value="Genomic_DNA"/>
</dbReference>
<dbReference type="PIR" id="C84699">
    <property type="entry name" value="C84699"/>
</dbReference>
<dbReference type="RefSeq" id="NP_565686.1">
    <molecule id="O82387-1"/>
    <property type="nucleotide sequence ID" value="NM_128522.1"/>
</dbReference>
<dbReference type="RefSeq" id="NP_850137.1">
    <molecule id="O82387-2"/>
    <property type="nucleotide sequence ID" value="NM_179806.2"/>
</dbReference>
<dbReference type="SMR" id="O82387"/>
<dbReference type="FunCoup" id="O82387">
    <property type="interactions" value="2327"/>
</dbReference>
<dbReference type="IntAct" id="O82387">
    <property type="interactions" value="4"/>
</dbReference>
<dbReference type="STRING" id="3702.O82387"/>
<dbReference type="iPTMnet" id="O82387"/>
<dbReference type="PaxDb" id="3702-AT2G29680.1"/>
<dbReference type="EnsemblPlants" id="AT2G29680.1">
    <molecule id="O82387-1"/>
    <property type="protein sequence ID" value="AT2G29680.1"/>
    <property type="gene ID" value="AT2G29680"/>
</dbReference>
<dbReference type="EnsemblPlants" id="AT2G29680.2">
    <molecule id="O82387-2"/>
    <property type="protein sequence ID" value="AT2G29680.2"/>
    <property type="gene ID" value="AT2G29680"/>
</dbReference>
<dbReference type="GeneID" id="817518"/>
<dbReference type="Gramene" id="AT2G29680.1">
    <molecule id="O82387-1"/>
    <property type="protein sequence ID" value="AT2G29680.1"/>
    <property type="gene ID" value="AT2G29680"/>
</dbReference>
<dbReference type="Gramene" id="AT2G29680.2">
    <molecule id="O82387-2"/>
    <property type="protein sequence ID" value="AT2G29680.2"/>
    <property type="gene ID" value="AT2G29680"/>
</dbReference>
<dbReference type="KEGG" id="ath:AT2G29680"/>
<dbReference type="Araport" id="AT2G29680"/>
<dbReference type="TAIR" id="AT2G29680">
    <property type="gene designation" value="CDC6"/>
</dbReference>
<dbReference type="eggNOG" id="KOG2227">
    <property type="taxonomic scope" value="Eukaryota"/>
</dbReference>
<dbReference type="InParanoid" id="O82387"/>
<dbReference type="OMA" id="WPTDEVY"/>
<dbReference type="PhylomeDB" id="O82387"/>
<dbReference type="PRO" id="PR:O82387"/>
<dbReference type="Proteomes" id="UP000006548">
    <property type="component" value="Chromosome 2"/>
</dbReference>
<dbReference type="ExpressionAtlas" id="O82387">
    <property type="expression patterns" value="baseline and differential"/>
</dbReference>
<dbReference type="GO" id="GO:0005634">
    <property type="term" value="C:nucleus"/>
    <property type="evidence" value="ECO:0007669"/>
    <property type="project" value="UniProtKB-SubCell"/>
</dbReference>
<dbReference type="GO" id="GO:0016887">
    <property type="term" value="F:ATP hydrolysis activity"/>
    <property type="evidence" value="ECO:0007669"/>
    <property type="project" value="InterPro"/>
</dbReference>
<dbReference type="GO" id="GO:0051301">
    <property type="term" value="P:cell division"/>
    <property type="evidence" value="ECO:0007669"/>
    <property type="project" value="UniProtKB-KW"/>
</dbReference>
<dbReference type="GO" id="GO:0042023">
    <property type="term" value="P:DNA endoreduplication"/>
    <property type="evidence" value="ECO:0000304"/>
    <property type="project" value="UniProtKB"/>
</dbReference>
<dbReference type="GO" id="GO:0006270">
    <property type="term" value="P:DNA replication initiation"/>
    <property type="evidence" value="ECO:0007669"/>
    <property type="project" value="InterPro"/>
</dbReference>
<dbReference type="CDD" id="cd00009">
    <property type="entry name" value="AAA"/>
    <property type="match status" value="1"/>
</dbReference>
<dbReference type="CDD" id="cd08768">
    <property type="entry name" value="Cdc6_C"/>
    <property type="match status" value="1"/>
</dbReference>
<dbReference type="FunFam" id="1.10.10.10:FF:000686">
    <property type="entry name" value="Cell division control protein"/>
    <property type="match status" value="1"/>
</dbReference>
<dbReference type="FunFam" id="1.10.8.60:FF:000102">
    <property type="entry name" value="Cell division control protein"/>
    <property type="match status" value="1"/>
</dbReference>
<dbReference type="FunFam" id="3.40.50.300:FF:000547">
    <property type="entry name" value="Cell division control protein"/>
    <property type="match status" value="1"/>
</dbReference>
<dbReference type="Gene3D" id="1.10.8.60">
    <property type="match status" value="1"/>
</dbReference>
<dbReference type="Gene3D" id="3.40.50.300">
    <property type="entry name" value="P-loop containing nucleotide triphosphate hydrolases"/>
    <property type="match status" value="1"/>
</dbReference>
<dbReference type="Gene3D" id="1.10.10.10">
    <property type="entry name" value="Winged helix-like DNA-binding domain superfamily/Winged helix DNA-binding domain"/>
    <property type="match status" value="1"/>
</dbReference>
<dbReference type="InterPro" id="IPR049945">
    <property type="entry name" value="AAA_22"/>
</dbReference>
<dbReference type="InterPro" id="IPR016314">
    <property type="entry name" value="Cdc6/18"/>
</dbReference>
<dbReference type="InterPro" id="IPR015163">
    <property type="entry name" value="Cdc6_C"/>
</dbReference>
<dbReference type="InterPro" id="IPR054425">
    <property type="entry name" value="Cdc6_ORC1-like_ATPase_lid"/>
</dbReference>
<dbReference type="InterPro" id="IPR050311">
    <property type="entry name" value="ORC1/CDC6"/>
</dbReference>
<dbReference type="InterPro" id="IPR027417">
    <property type="entry name" value="P-loop_NTPase"/>
</dbReference>
<dbReference type="InterPro" id="IPR036388">
    <property type="entry name" value="WH-like_DNA-bd_sf"/>
</dbReference>
<dbReference type="InterPro" id="IPR036390">
    <property type="entry name" value="WH_DNA-bd_sf"/>
</dbReference>
<dbReference type="PANTHER" id="PTHR10763:SF26">
    <property type="entry name" value="CELL DIVISION CONTROL PROTEIN 6 HOMOLOG"/>
    <property type="match status" value="1"/>
</dbReference>
<dbReference type="PANTHER" id="PTHR10763">
    <property type="entry name" value="CELL DIVISION CONTROL PROTEIN 6-RELATED"/>
    <property type="match status" value="1"/>
</dbReference>
<dbReference type="Pfam" id="PF13401">
    <property type="entry name" value="AAA_22"/>
    <property type="match status" value="1"/>
</dbReference>
<dbReference type="Pfam" id="PF22606">
    <property type="entry name" value="Cdc6-ORC-like_ATPase_lid"/>
    <property type="match status" value="1"/>
</dbReference>
<dbReference type="Pfam" id="PF09079">
    <property type="entry name" value="Cdc6_C"/>
    <property type="match status" value="1"/>
</dbReference>
<dbReference type="PIRSF" id="PIRSF001767">
    <property type="entry name" value="Cdc6"/>
    <property type="match status" value="1"/>
</dbReference>
<dbReference type="SMART" id="SM01074">
    <property type="entry name" value="Cdc6_C"/>
    <property type="match status" value="1"/>
</dbReference>
<dbReference type="SUPFAM" id="SSF52540">
    <property type="entry name" value="P-loop containing nucleoside triphosphate hydrolases"/>
    <property type="match status" value="1"/>
</dbReference>
<dbReference type="SUPFAM" id="SSF46785">
    <property type="entry name" value="Winged helix' DNA-binding domain"/>
    <property type="match status" value="1"/>
</dbReference>
<gene>
    <name evidence="6" type="primary">CDC6</name>
    <name evidence="9" type="ordered locus">At2g29680</name>
</gene>
<organism>
    <name type="scientific">Arabidopsis thaliana</name>
    <name type="common">Mouse-ear cress</name>
    <dbReference type="NCBI Taxonomy" id="3702"/>
    <lineage>
        <taxon>Eukaryota</taxon>
        <taxon>Viridiplantae</taxon>
        <taxon>Streptophyta</taxon>
        <taxon>Embryophyta</taxon>
        <taxon>Tracheophyta</taxon>
        <taxon>Spermatophyta</taxon>
        <taxon>Magnoliopsida</taxon>
        <taxon>eudicotyledons</taxon>
        <taxon>Gunneridae</taxon>
        <taxon>Pentapetalae</taxon>
        <taxon>rosids</taxon>
        <taxon>malvids</taxon>
        <taxon>Brassicales</taxon>
        <taxon>Brassicaceae</taxon>
        <taxon>Camelineae</taxon>
        <taxon>Arabidopsis</taxon>
    </lineage>
</organism>
<name>CDC6A_ARATH</name>
<keyword id="KW-0025">Alternative splicing</keyword>
<keyword id="KW-0131">Cell cycle</keyword>
<keyword id="KW-0132">Cell division</keyword>
<keyword id="KW-0235">DNA replication</keyword>
<keyword id="KW-0539">Nucleus</keyword>
<keyword id="KW-1185">Reference proteome</keyword>
<reference key="1">
    <citation type="journal article" date="2001" name="J. Exp. Bot.">
        <title>DNA replication in plants: characterization of a cdc6 homologue from Arabidopsis thaliana.</title>
        <authorList>
            <person name="Ramos G.B."/>
            <person name="de Almeida Engler J."/>
            <person name="Ferreira P.C."/>
            <person name="Hemerly A.S."/>
        </authorList>
    </citation>
    <scope>NUCLEOTIDE SEQUENCE [MRNA] (ISOFORM 1)</scope>
    <scope>TISSUE SPECIFICITY</scope>
</reference>
<reference key="2">
    <citation type="journal article" date="2001" name="Plant Cell">
        <title>Expression and stability of Arabidopsis CDC6 are associated with endoreplication.</title>
        <authorList>
            <person name="Castellano M.M."/>
            <person name="del Pozo J.C."/>
            <person name="Ramirez-Parra E."/>
            <person name="Brown S."/>
            <person name="Gutierrez C."/>
        </authorList>
    </citation>
    <scope>NUCLEOTIDE SEQUENCE [MRNA] (ISOFORM 2)</scope>
    <scope>FUNCTION</scope>
    <scope>TISSUE SPECIFICITY</scope>
    <scope>INDUCTION</scope>
</reference>
<reference key="3">
    <citation type="submission" date="2000-08" db="EMBL/GenBank/DDBJ databases">
        <title>Study of Arabidopsis thaliana homologue of cdc6p.</title>
        <authorList>
            <person name="Ruelland E."/>
            <person name="Bergounioux C."/>
            <person name="Glab N."/>
        </authorList>
    </citation>
    <scope>NUCLEOTIDE SEQUENCE [MRNA] (ISOFORM 2)</scope>
</reference>
<reference key="4">
    <citation type="journal article" date="1999" name="Nature">
        <title>Sequence and analysis of chromosome 2 of the plant Arabidopsis thaliana.</title>
        <authorList>
            <person name="Lin X."/>
            <person name="Kaul S."/>
            <person name="Rounsley S.D."/>
            <person name="Shea T.P."/>
            <person name="Benito M.-I."/>
            <person name="Town C.D."/>
            <person name="Fujii C.Y."/>
            <person name="Mason T.M."/>
            <person name="Bowman C.L."/>
            <person name="Barnstead M.E."/>
            <person name="Feldblyum T.V."/>
            <person name="Buell C.R."/>
            <person name="Ketchum K.A."/>
            <person name="Lee J.J."/>
            <person name="Ronning C.M."/>
            <person name="Koo H.L."/>
            <person name="Moffat K.S."/>
            <person name="Cronin L.A."/>
            <person name="Shen M."/>
            <person name="Pai G."/>
            <person name="Van Aken S."/>
            <person name="Umayam L."/>
            <person name="Tallon L.J."/>
            <person name="Gill J.E."/>
            <person name="Adams M.D."/>
            <person name="Carrera A.J."/>
            <person name="Creasy T.H."/>
            <person name="Goodman H.M."/>
            <person name="Somerville C.R."/>
            <person name="Copenhaver G.P."/>
            <person name="Preuss D."/>
            <person name="Nierman W.C."/>
            <person name="White O."/>
            <person name="Eisen J.A."/>
            <person name="Salzberg S.L."/>
            <person name="Fraser C.M."/>
            <person name="Venter J.C."/>
        </authorList>
    </citation>
    <scope>NUCLEOTIDE SEQUENCE [LARGE SCALE GENOMIC DNA]</scope>
    <source>
        <strain>cv. Columbia</strain>
    </source>
</reference>
<reference key="5">
    <citation type="journal article" date="2017" name="Plant J.">
        <title>Araport11: a complete reannotation of the Arabidopsis thaliana reference genome.</title>
        <authorList>
            <person name="Cheng C.Y."/>
            <person name="Krishnakumar V."/>
            <person name="Chan A.P."/>
            <person name="Thibaud-Nissen F."/>
            <person name="Schobel S."/>
            <person name="Town C.D."/>
        </authorList>
    </citation>
    <scope>GENOME REANNOTATION</scope>
    <source>
        <strain>cv. Columbia</strain>
    </source>
</reference>
<reference key="6">
    <citation type="journal article" date="2001" name="Plant Mol. Biol.">
        <title>Arabidopsis E2F1 binds a sequence present in the promoter of S-phase-regulated gene AtCDC6 and is a member of a multigene family with differential activities.</title>
        <authorList>
            <person name="de Jager S.M."/>
            <person name="Menges M."/>
            <person name="Bauer U.M."/>
            <person name="Murra J.A."/>
        </authorList>
    </citation>
    <scope>INDUCTION</scope>
</reference>
<comment type="function">
    <text evidence="8">May be involved in the initiation of DNA replication. May play a role in endoreduplication. Could act as one of the factors that contributes to maintain endoreduplication competence.</text>
</comment>
<comment type="subcellular location">
    <subcellularLocation>
        <location evidence="7">Nucleus</location>
    </subcellularLocation>
</comment>
<comment type="alternative products">
    <event type="alternative splicing"/>
    <isoform>
        <id>O82387-1</id>
        <name>1</name>
        <sequence type="displayed"/>
    </isoform>
    <isoform>
        <id>O82387-2</id>
        <name>2</name>
        <sequence type="described" ref="VSP_057638"/>
    </isoform>
</comment>
<comment type="tissue specificity">
    <text evidence="2 4">Highly expressed in roots, flower buds and etiolated seedlings. Expressed in leaves and stems (PubMed:11604464). Highly expressed in proliferating cells such as root meristems, leaf primordia and young growing leaves, as well as cells undergoing endoreduplication cycles (PubMed:11752380).</text>
</comment>
<comment type="induction">
    <text evidence="3 4">Cell cycle regulated. Up-regulated at the G1/S phase transition and then decreases rapidly as cells progress into S-phase (PubMed:11669580, PubMed:11752380). Degraded in a proteasome-dependent manner in proliferating cells, but not in endoreduplicating cells (PubMed:11752380).</text>
</comment>
<comment type="miscellaneous">
    <text evidence="4">Cells expressing ectopically CDC6 have increased levels of endopolyploidy.</text>
</comment>
<comment type="similarity">
    <text evidence="7">Belongs to the CDC6/cdc18 family.</text>
</comment>
<sequence>MPAIAGPSSSPQKHVVGSRSESIGGVRSAEVNTSRKRKLISDSAAEVSATVVLPVNSISTPMKWKSPRRCAVSIPKTSDEEIKEDSNEKLENPVISVCLEVKSKWNPKDDEQMKAVKEALHVSKAPSTVVCREDEQRRVFEFVKGCMEQKKAGSLYICGCPGTGKSLSMEKVRLQAEEWAKQAGLHCPETVSVNCTSLTKSTDIFSKILGNYESGKKANGSFSPLQQLQRLFSQKQQQSRSKMMLIIADEMDYLITRDRGVLHELFMLTTLPLSRCILIGTVFCVINVHFLKSVSYGQTSFKFKVRICPPGVANAIDLADRFLPKLKSLNCKPLVVTFRAYSKDQILRILQERLVALPFVAFQSNALEICARKVSAASGDMRKALCVCRSALEILEIEVRGSIDQEPKGPVPECQVVKMDHMIAALSKTFKSPIVDTIQSLPQHQQIIVCSAAKAFRGSKKDRTIAELNKLYLEICKSSMITPAGITEFSNMCTVLNDQGILKLSLARDDKLKRVSLRVDEADITFALKEIRFFRNCLL</sequence>